<reference key="1">
    <citation type="submission" date="2006-12" db="EMBL/GenBank/DDBJ databases">
        <title>Complete sequence of chromosome 1 of Acidovorax sp. JS42.</title>
        <authorList>
            <person name="Copeland A."/>
            <person name="Lucas S."/>
            <person name="Lapidus A."/>
            <person name="Barry K."/>
            <person name="Detter J.C."/>
            <person name="Glavina del Rio T."/>
            <person name="Dalin E."/>
            <person name="Tice H."/>
            <person name="Pitluck S."/>
            <person name="Chertkov O."/>
            <person name="Brettin T."/>
            <person name="Bruce D."/>
            <person name="Han C."/>
            <person name="Tapia R."/>
            <person name="Gilna P."/>
            <person name="Schmutz J."/>
            <person name="Larimer F."/>
            <person name="Land M."/>
            <person name="Hauser L."/>
            <person name="Kyrpides N."/>
            <person name="Kim E."/>
            <person name="Stahl D."/>
            <person name="Richardson P."/>
        </authorList>
    </citation>
    <scope>NUCLEOTIDE SEQUENCE [LARGE SCALE GENOMIC DNA]</scope>
    <source>
        <strain>JS42</strain>
    </source>
</reference>
<dbReference type="EMBL" id="CP000539">
    <property type="protein sequence ID" value="ABM40556.1"/>
    <property type="molecule type" value="Genomic_DNA"/>
</dbReference>
<dbReference type="SMR" id="A1W2T1"/>
<dbReference type="STRING" id="232721.Ajs_0302"/>
<dbReference type="KEGG" id="ajs:Ajs_0302"/>
<dbReference type="eggNOG" id="COG0356">
    <property type="taxonomic scope" value="Bacteria"/>
</dbReference>
<dbReference type="HOGENOM" id="CLU_041018_1_0_4"/>
<dbReference type="Proteomes" id="UP000000645">
    <property type="component" value="Chromosome"/>
</dbReference>
<dbReference type="GO" id="GO:0005886">
    <property type="term" value="C:plasma membrane"/>
    <property type="evidence" value="ECO:0007669"/>
    <property type="project" value="UniProtKB-SubCell"/>
</dbReference>
<dbReference type="GO" id="GO:0045259">
    <property type="term" value="C:proton-transporting ATP synthase complex"/>
    <property type="evidence" value="ECO:0007669"/>
    <property type="project" value="UniProtKB-KW"/>
</dbReference>
<dbReference type="GO" id="GO:0046933">
    <property type="term" value="F:proton-transporting ATP synthase activity, rotational mechanism"/>
    <property type="evidence" value="ECO:0007669"/>
    <property type="project" value="UniProtKB-UniRule"/>
</dbReference>
<dbReference type="GO" id="GO:0042777">
    <property type="term" value="P:proton motive force-driven plasma membrane ATP synthesis"/>
    <property type="evidence" value="ECO:0007669"/>
    <property type="project" value="TreeGrafter"/>
</dbReference>
<dbReference type="CDD" id="cd00310">
    <property type="entry name" value="ATP-synt_Fo_a_6"/>
    <property type="match status" value="1"/>
</dbReference>
<dbReference type="FunFam" id="1.20.120.220:FF:000002">
    <property type="entry name" value="ATP synthase subunit a"/>
    <property type="match status" value="1"/>
</dbReference>
<dbReference type="Gene3D" id="1.20.120.220">
    <property type="entry name" value="ATP synthase, F0 complex, subunit A"/>
    <property type="match status" value="1"/>
</dbReference>
<dbReference type="HAMAP" id="MF_01393">
    <property type="entry name" value="ATP_synth_a_bact"/>
    <property type="match status" value="1"/>
</dbReference>
<dbReference type="InterPro" id="IPR045082">
    <property type="entry name" value="ATP_syn_F0_a_bact/chloroplast"/>
</dbReference>
<dbReference type="InterPro" id="IPR000568">
    <property type="entry name" value="ATP_synth_F0_asu"/>
</dbReference>
<dbReference type="InterPro" id="IPR023011">
    <property type="entry name" value="ATP_synth_F0_asu_AS"/>
</dbReference>
<dbReference type="InterPro" id="IPR035908">
    <property type="entry name" value="F0_ATP_A_sf"/>
</dbReference>
<dbReference type="NCBIfam" id="TIGR01131">
    <property type="entry name" value="ATP_synt_6_or_A"/>
    <property type="match status" value="1"/>
</dbReference>
<dbReference type="NCBIfam" id="NF004477">
    <property type="entry name" value="PRK05815.1-1"/>
    <property type="match status" value="1"/>
</dbReference>
<dbReference type="PANTHER" id="PTHR42823">
    <property type="entry name" value="ATP SYNTHASE SUBUNIT A, CHLOROPLASTIC"/>
    <property type="match status" value="1"/>
</dbReference>
<dbReference type="PANTHER" id="PTHR42823:SF3">
    <property type="entry name" value="ATP SYNTHASE SUBUNIT A, CHLOROPLASTIC"/>
    <property type="match status" value="1"/>
</dbReference>
<dbReference type="Pfam" id="PF00119">
    <property type="entry name" value="ATP-synt_A"/>
    <property type="match status" value="1"/>
</dbReference>
<dbReference type="SUPFAM" id="SSF81336">
    <property type="entry name" value="F1F0 ATP synthase subunit A"/>
    <property type="match status" value="1"/>
</dbReference>
<dbReference type="PROSITE" id="PS00449">
    <property type="entry name" value="ATPASE_A"/>
    <property type="match status" value="1"/>
</dbReference>
<organism>
    <name type="scientific">Acidovorax sp. (strain JS42)</name>
    <dbReference type="NCBI Taxonomy" id="232721"/>
    <lineage>
        <taxon>Bacteria</taxon>
        <taxon>Pseudomonadati</taxon>
        <taxon>Pseudomonadota</taxon>
        <taxon>Betaproteobacteria</taxon>
        <taxon>Burkholderiales</taxon>
        <taxon>Comamonadaceae</taxon>
        <taxon>Acidovorax</taxon>
    </lineage>
</organism>
<feature type="chain" id="PRO_1000145253" description="ATP synthase subunit a">
    <location>
        <begin position="1"/>
        <end position="287"/>
    </location>
</feature>
<feature type="transmembrane region" description="Helical" evidence="1">
    <location>
        <begin position="37"/>
        <end position="57"/>
    </location>
</feature>
<feature type="transmembrane region" description="Helical" evidence="1">
    <location>
        <begin position="96"/>
        <end position="116"/>
    </location>
</feature>
<feature type="transmembrane region" description="Helical" evidence="1">
    <location>
        <begin position="149"/>
        <end position="169"/>
    </location>
</feature>
<feature type="transmembrane region" description="Helical" evidence="1">
    <location>
        <begin position="187"/>
        <end position="207"/>
    </location>
</feature>
<feature type="transmembrane region" description="Helical" evidence="1">
    <location>
        <begin position="224"/>
        <end position="244"/>
    </location>
</feature>
<feature type="transmembrane region" description="Helical" evidence="1">
    <location>
        <begin position="266"/>
        <end position="286"/>
    </location>
</feature>
<gene>
    <name evidence="1" type="primary">atpB</name>
    <name type="ordered locus">Ajs_0302</name>
</gene>
<keyword id="KW-0066">ATP synthesis</keyword>
<keyword id="KW-0997">Cell inner membrane</keyword>
<keyword id="KW-1003">Cell membrane</keyword>
<keyword id="KW-0138">CF(0)</keyword>
<keyword id="KW-0375">Hydrogen ion transport</keyword>
<keyword id="KW-0406">Ion transport</keyword>
<keyword id="KW-0472">Membrane</keyword>
<keyword id="KW-0812">Transmembrane</keyword>
<keyword id="KW-1133">Transmembrane helix</keyword>
<keyword id="KW-0813">Transport</keyword>
<evidence type="ECO:0000255" key="1">
    <source>
        <dbReference type="HAMAP-Rule" id="MF_01393"/>
    </source>
</evidence>
<protein>
    <recommendedName>
        <fullName evidence="1">ATP synthase subunit a</fullName>
    </recommendedName>
    <alternativeName>
        <fullName evidence="1">ATP synthase F0 sector subunit a</fullName>
    </alternativeName>
    <alternativeName>
        <fullName evidence="1">F-ATPase subunit 6</fullName>
    </alternativeName>
</protein>
<name>ATP6_ACISJ</name>
<accession>A1W2T1</accession>
<proteinExistence type="inferred from homology"/>
<sequence>MAADAHAPTASEYIVHHLQHLQNIKQKSIIDFSVVNLDSVAVSVILGVLGLFVMWLAARTATSGVPSRFQAAVEMLVEMVDNQAKANIHNAQSRKFIAPLALTVFVWIFLMNAMDLLPVDLLPVLWQVATGDSHAYLRVVPTADLSTTLGLSSAVLILCFVYSIKIKGLGGWAHELVTAPFGTSKNPVFALILGVVNLLMQIIEYVAKTVSHGMRLFGNMYAGELVFMLIALMGGAAAMSLSGVLLPVGHIIAGSIWAIFHILIITLQAFIFMMLTLIYLGQAHEAH</sequence>
<comment type="function">
    <text evidence="1">Key component of the proton channel; it plays a direct role in the translocation of protons across the membrane.</text>
</comment>
<comment type="subunit">
    <text evidence="1">F-type ATPases have 2 components, CF(1) - the catalytic core - and CF(0) - the membrane proton channel. CF(1) has five subunits: alpha(3), beta(3), gamma(1), delta(1), epsilon(1). CF(0) has three main subunits: a(1), b(2) and c(9-12). The alpha and beta chains form an alternating ring which encloses part of the gamma chain. CF(1) is attached to CF(0) by a central stalk formed by the gamma and epsilon chains, while a peripheral stalk is formed by the delta and b chains.</text>
</comment>
<comment type="subcellular location">
    <subcellularLocation>
        <location evidence="1">Cell inner membrane</location>
        <topology evidence="1">Multi-pass membrane protein</topology>
    </subcellularLocation>
</comment>
<comment type="similarity">
    <text evidence="1">Belongs to the ATPase A chain family.</text>
</comment>